<evidence type="ECO:0000255" key="1">
    <source>
        <dbReference type="HAMAP-Rule" id="MF_01342"/>
    </source>
</evidence>
<evidence type="ECO:0000305" key="2"/>
<accession>B0K5Q0</accession>
<gene>
    <name evidence="1" type="primary">rplP</name>
    <name type="ordered locus">Teth514_0874</name>
</gene>
<organism>
    <name type="scientific">Thermoanaerobacter sp. (strain X514)</name>
    <dbReference type="NCBI Taxonomy" id="399726"/>
    <lineage>
        <taxon>Bacteria</taxon>
        <taxon>Bacillati</taxon>
        <taxon>Bacillota</taxon>
        <taxon>Clostridia</taxon>
        <taxon>Thermoanaerobacterales</taxon>
        <taxon>Thermoanaerobacteraceae</taxon>
        <taxon>Thermoanaerobacter</taxon>
    </lineage>
</organism>
<protein>
    <recommendedName>
        <fullName evidence="1">Large ribosomal subunit protein uL16</fullName>
    </recommendedName>
    <alternativeName>
        <fullName evidence="2">50S ribosomal protein L16</fullName>
    </alternativeName>
</protein>
<feature type="chain" id="PRO_1000143042" description="Large ribosomal subunit protein uL16">
    <location>
        <begin position="1"/>
        <end position="144"/>
    </location>
</feature>
<reference key="1">
    <citation type="submission" date="2008-01" db="EMBL/GenBank/DDBJ databases">
        <title>Complete sequence of Thermoanaerobacter sp. X514.</title>
        <authorList>
            <consortium name="US DOE Joint Genome Institute"/>
            <person name="Copeland A."/>
            <person name="Lucas S."/>
            <person name="Lapidus A."/>
            <person name="Barry K."/>
            <person name="Glavina del Rio T."/>
            <person name="Dalin E."/>
            <person name="Tice H."/>
            <person name="Pitluck S."/>
            <person name="Bruce D."/>
            <person name="Goodwin L."/>
            <person name="Saunders E."/>
            <person name="Brettin T."/>
            <person name="Detter J.C."/>
            <person name="Han C."/>
            <person name="Schmutz J."/>
            <person name="Larimer F."/>
            <person name="Land M."/>
            <person name="Hauser L."/>
            <person name="Kyrpides N."/>
            <person name="Kim E."/>
            <person name="Hemme C."/>
            <person name="Fields M.W."/>
            <person name="He Z."/>
            <person name="Zhou J."/>
            <person name="Richardson P."/>
        </authorList>
    </citation>
    <scope>NUCLEOTIDE SEQUENCE [LARGE SCALE GENOMIC DNA]</scope>
    <source>
        <strain>X514</strain>
    </source>
</reference>
<name>RL16_THEPX</name>
<keyword id="KW-0687">Ribonucleoprotein</keyword>
<keyword id="KW-0689">Ribosomal protein</keyword>
<keyword id="KW-0694">RNA-binding</keyword>
<keyword id="KW-0699">rRNA-binding</keyword>
<keyword id="KW-0820">tRNA-binding</keyword>
<proteinExistence type="inferred from homology"/>
<comment type="function">
    <text evidence="1">Binds 23S rRNA and is also seen to make contacts with the A and possibly P site tRNAs.</text>
</comment>
<comment type="subunit">
    <text evidence="1">Part of the 50S ribosomal subunit.</text>
</comment>
<comment type="similarity">
    <text evidence="1">Belongs to the universal ribosomal protein uL16 family.</text>
</comment>
<sequence>MLMPKRVKYRKQQRGRIKGNATRGNTLTYGEYGLQALEPGWITATQIEAARVAMTRFIKRGGKVWIKIFPDKPVTKKPAETRMGSGKGSPEFWVAVVKPGRVLFEIAGVSEEVAKEALRLAMHKLPIKTKFLKREELGGEDNES</sequence>
<dbReference type="EMBL" id="CP000923">
    <property type="protein sequence ID" value="ABY92176.1"/>
    <property type="molecule type" value="Genomic_DNA"/>
</dbReference>
<dbReference type="RefSeq" id="WP_003868567.1">
    <property type="nucleotide sequence ID" value="NC_010320.1"/>
</dbReference>
<dbReference type="SMR" id="B0K5Q0"/>
<dbReference type="KEGG" id="tex:Teth514_0874"/>
<dbReference type="HOGENOM" id="CLU_078858_2_1_9"/>
<dbReference type="Proteomes" id="UP000002155">
    <property type="component" value="Chromosome"/>
</dbReference>
<dbReference type="GO" id="GO:0022625">
    <property type="term" value="C:cytosolic large ribosomal subunit"/>
    <property type="evidence" value="ECO:0007669"/>
    <property type="project" value="TreeGrafter"/>
</dbReference>
<dbReference type="GO" id="GO:0019843">
    <property type="term" value="F:rRNA binding"/>
    <property type="evidence" value="ECO:0007669"/>
    <property type="project" value="UniProtKB-UniRule"/>
</dbReference>
<dbReference type="GO" id="GO:0003735">
    <property type="term" value="F:structural constituent of ribosome"/>
    <property type="evidence" value="ECO:0007669"/>
    <property type="project" value="InterPro"/>
</dbReference>
<dbReference type="GO" id="GO:0000049">
    <property type="term" value="F:tRNA binding"/>
    <property type="evidence" value="ECO:0007669"/>
    <property type="project" value="UniProtKB-KW"/>
</dbReference>
<dbReference type="GO" id="GO:0006412">
    <property type="term" value="P:translation"/>
    <property type="evidence" value="ECO:0007669"/>
    <property type="project" value="UniProtKB-UniRule"/>
</dbReference>
<dbReference type="CDD" id="cd01433">
    <property type="entry name" value="Ribosomal_L16_L10e"/>
    <property type="match status" value="1"/>
</dbReference>
<dbReference type="FunFam" id="3.90.1170.10:FF:000001">
    <property type="entry name" value="50S ribosomal protein L16"/>
    <property type="match status" value="1"/>
</dbReference>
<dbReference type="Gene3D" id="3.90.1170.10">
    <property type="entry name" value="Ribosomal protein L10e/L16"/>
    <property type="match status" value="1"/>
</dbReference>
<dbReference type="HAMAP" id="MF_01342">
    <property type="entry name" value="Ribosomal_uL16"/>
    <property type="match status" value="1"/>
</dbReference>
<dbReference type="InterPro" id="IPR047873">
    <property type="entry name" value="Ribosomal_uL16"/>
</dbReference>
<dbReference type="InterPro" id="IPR000114">
    <property type="entry name" value="Ribosomal_uL16_bact-type"/>
</dbReference>
<dbReference type="InterPro" id="IPR020798">
    <property type="entry name" value="Ribosomal_uL16_CS"/>
</dbReference>
<dbReference type="InterPro" id="IPR016180">
    <property type="entry name" value="Ribosomal_uL16_dom"/>
</dbReference>
<dbReference type="InterPro" id="IPR036920">
    <property type="entry name" value="Ribosomal_uL16_sf"/>
</dbReference>
<dbReference type="NCBIfam" id="TIGR01164">
    <property type="entry name" value="rplP_bact"/>
    <property type="match status" value="1"/>
</dbReference>
<dbReference type="PANTHER" id="PTHR12220">
    <property type="entry name" value="50S/60S RIBOSOMAL PROTEIN L16"/>
    <property type="match status" value="1"/>
</dbReference>
<dbReference type="PANTHER" id="PTHR12220:SF13">
    <property type="entry name" value="LARGE RIBOSOMAL SUBUNIT PROTEIN UL16M"/>
    <property type="match status" value="1"/>
</dbReference>
<dbReference type="Pfam" id="PF00252">
    <property type="entry name" value="Ribosomal_L16"/>
    <property type="match status" value="1"/>
</dbReference>
<dbReference type="PRINTS" id="PR00060">
    <property type="entry name" value="RIBOSOMALL16"/>
</dbReference>
<dbReference type="SUPFAM" id="SSF54686">
    <property type="entry name" value="Ribosomal protein L16p/L10e"/>
    <property type="match status" value="1"/>
</dbReference>
<dbReference type="PROSITE" id="PS00586">
    <property type="entry name" value="RIBOSOMAL_L16_1"/>
    <property type="match status" value="1"/>
</dbReference>
<dbReference type="PROSITE" id="PS00701">
    <property type="entry name" value="RIBOSOMAL_L16_2"/>
    <property type="match status" value="1"/>
</dbReference>